<comment type="function">
    <text evidence="1">NDH-1 shuttles electrons from an unknown electron donor, via FMN and iron-sulfur (Fe-S) centers, to quinones in the respiratory and/or the photosynthetic chain. The immediate electron acceptor for the enzyme in this species is believed to be plastoquinone. Couples the redox reaction to proton translocation, and thus conserves the redox energy in a proton gradient. Cyanobacterial NDH-1 also plays a role in inorganic carbon-concentration.</text>
</comment>
<comment type="catalytic activity">
    <reaction evidence="1">
        <text>a plastoquinone + NADH + (n+1) H(+)(in) = a plastoquinol + NAD(+) + n H(+)(out)</text>
        <dbReference type="Rhea" id="RHEA:42608"/>
        <dbReference type="Rhea" id="RHEA-COMP:9561"/>
        <dbReference type="Rhea" id="RHEA-COMP:9562"/>
        <dbReference type="ChEBI" id="CHEBI:15378"/>
        <dbReference type="ChEBI" id="CHEBI:17757"/>
        <dbReference type="ChEBI" id="CHEBI:57540"/>
        <dbReference type="ChEBI" id="CHEBI:57945"/>
        <dbReference type="ChEBI" id="CHEBI:62192"/>
    </reaction>
</comment>
<comment type="catalytic activity">
    <reaction evidence="1">
        <text>a plastoquinone + NADPH + (n+1) H(+)(in) = a plastoquinol + NADP(+) + n H(+)(out)</text>
        <dbReference type="Rhea" id="RHEA:42612"/>
        <dbReference type="Rhea" id="RHEA-COMP:9561"/>
        <dbReference type="Rhea" id="RHEA-COMP:9562"/>
        <dbReference type="ChEBI" id="CHEBI:15378"/>
        <dbReference type="ChEBI" id="CHEBI:17757"/>
        <dbReference type="ChEBI" id="CHEBI:57783"/>
        <dbReference type="ChEBI" id="CHEBI:58349"/>
        <dbReference type="ChEBI" id="CHEBI:62192"/>
    </reaction>
</comment>
<comment type="subunit">
    <text evidence="1">NDH-1 can be composed of about 15 different subunits; different subcomplexes with different compositions have been identified which probably have different functions.</text>
</comment>
<comment type="subcellular location">
    <subcellularLocation>
        <location evidence="1">Cellular thylakoid membrane</location>
        <topology evidence="1">Multi-pass membrane protein</topology>
    </subcellularLocation>
</comment>
<comment type="similarity">
    <text evidence="1">Belongs to the complex I NdhL subunit family.</text>
</comment>
<organism>
    <name type="scientific">Synechococcus sp. (strain CC9311)</name>
    <dbReference type="NCBI Taxonomy" id="64471"/>
    <lineage>
        <taxon>Bacteria</taxon>
        <taxon>Bacillati</taxon>
        <taxon>Cyanobacteriota</taxon>
        <taxon>Cyanophyceae</taxon>
        <taxon>Synechococcales</taxon>
        <taxon>Synechococcaceae</taxon>
        <taxon>Synechococcus</taxon>
    </lineage>
</organism>
<sequence length="83" mass="9465">MSIENLLSSVSLDTLLVIGGYVALGGLYLVVMPLLLFFWMNWRWHVMGKIERFSVYGLVFFFFPGMIVFAPFLNLRLSGQGEV</sequence>
<reference key="1">
    <citation type="journal article" date="2006" name="Proc. Natl. Acad. Sci. U.S.A.">
        <title>Genome sequence of Synechococcus CC9311: insights into adaptation to a coastal environment.</title>
        <authorList>
            <person name="Palenik B."/>
            <person name="Ren Q."/>
            <person name="Dupont C.L."/>
            <person name="Myers G.S."/>
            <person name="Heidelberg J.F."/>
            <person name="Badger J.H."/>
            <person name="Madupu R."/>
            <person name="Nelson W.C."/>
            <person name="Brinkac L.M."/>
            <person name="Dodson R.J."/>
            <person name="Durkin A.S."/>
            <person name="Daugherty S.C."/>
            <person name="Sullivan S.A."/>
            <person name="Khouri H."/>
            <person name="Mohamoud Y."/>
            <person name="Halpin R."/>
            <person name="Paulsen I.T."/>
        </authorList>
    </citation>
    <scope>NUCLEOTIDE SEQUENCE [LARGE SCALE GENOMIC DNA]</scope>
    <source>
        <strain>CC9311</strain>
    </source>
</reference>
<gene>
    <name evidence="1" type="primary">ndhL</name>
    <name type="ordered locus">sync_1912</name>
</gene>
<feature type="chain" id="PRO_0000353687" description="NAD(P)H-quinone oxidoreductase subunit L">
    <location>
        <begin position="1"/>
        <end position="83"/>
    </location>
</feature>
<feature type="transmembrane region" description="Helical" evidence="1">
    <location>
        <begin position="18"/>
        <end position="38"/>
    </location>
</feature>
<feature type="transmembrane region" description="Helical" evidence="1">
    <location>
        <begin position="53"/>
        <end position="73"/>
    </location>
</feature>
<evidence type="ECO:0000255" key="1">
    <source>
        <dbReference type="HAMAP-Rule" id="MF_01355"/>
    </source>
</evidence>
<keyword id="KW-0472">Membrane</keyword>
<keyword id="KW-0520">NAD</keyword>
<keyword id="KW-0521">NADP</keyword>
<keyword id="KW-0618">Plastoquinone</keyword>
<keyword id="KW-0874">Quinone</keyword>
<keyword id="KW-1185">Reference proteome</keyword>
<keyword id="KW-0793">Thylakoid</keyword>
<keyword id="KW-1278">Translocase</keyword>
<keyword id="KW-0812">Transmembrane</keyword>
<keyword id="KW-1133">Transmembrane helix</keyword>
<keyword id="KW-0813">Transport</keyword>
<dbReference type="EC" id="7.1.1.-" evidence="1"/>
<dbReference type="EMBL" id="CP000435">
    <property type="protein sequence ID" value="ABI47599.1"/>
    <property type="molecule type" value="Genomic_DNA"/>
</dbReference>
<dbReference type="RefSeq" id="WP_011619829.1">
    <property type="nucleotide sequence ID" value="NC_008319.1"/>
</dbReference>
<dbReference type="SMR" id="Q0I8V6"/>
<dbReference type="STRING" id="64471.sync_1912"/>
<dbReference type="KEGG" id="syg:sync_1912"/>
<dbReference type="eggNOG" id="ENOG5032ZM4">
    <property type="taxonomic scope" value="Bacteria"/>
</dbReference>
<dbReference type="HOGENOM" id="CLU_171077_1_0_3"/>
<dbReference type="OrthoDB" id="517549at2"/>
<dbReference type="Proteomes" id="UP000001961">
    <property type="component" value="Chromosome"/>
</dbReference>
<dbReference type="GO" id="GO:0031676">
    <property type="term" value="C:plasma membrane-derived thylakoid membrane"/>
    <property type="evidence" value="ECO:0007669"/>
    <property type="project" value="UniProtKB-SubCell"/>
</dbReference>
<dbReference type="GO" id="GO:0016655">
    <property type="term" value="F:oxidoreductase activity, acting on NAD(P)H, quinone or similar compound as acceptor"/>
    <property type="evidence" value="ECO:0007669"/>
    <property type="project" value="UniProtKB-UniRule"/>
</dbReference>
<dbReference type="GO" id="GO:0048038">
    <property type="term" value="F:quinone binding"/>
    <property type="evidence" value="ECO:0007669"/>
    <property type="project" value="UniProtKB-KW"/>
</dbReference>
<dbReference type="HAMAP" id="MF_01355">
    <property type="entry name" value="NDH1_NDH1L"/>
    <property type="match status" value="1"/>
</dbReference>
<dbReference type="InterPro" id="IPR019654">
    <property type="entry name" value="NADH-quinone_OxRdatse_su_L"/>
</dbReference>
<dbReference type="Pfam" id="PF10716">
    <property type="entry name" value="NdhL"/>
    <property type="match status" value="1"/>
</dbReference>
<protein>
    <recommendedName>
        <fullName evidence="1">NAD(P)H-quinone oxidoreductase subunit L</fullName>
        <ecNumber evidence="1">7.1.1.-</ecNumber>
    </recommendedName>
    <alternativeName>
        <fullName evidence="1">NAD(P)H dehydrogenase I subunit L</fullName>
    </alternativeName>
    <alternativeName>
        <fullName>NDH-1 subunit L</fullName>
    </alternativeName>
    <alternativeName>
        <fullName>NDH-L</fullName>
    </alternativeName>
</protein>
<accession>Q0I8V6</accession>
<name>NDHL_SYNS3</name>
<proteinExistence type="inferred from homology"/>